<protein>
    <recommendedName>
        <fullName evidence="1">Aspartate--tRNA(Asp/Asn) ligase</fullName>
        <ecNumber evidence="1">6.1.1.23</ecNumber>
    </recommendedName>
    <alternativeName>
        <fullName evidence="1">Aspartyl-tRNA synthetase</fullName>
        <shortName evidence="1">AspRS</shortName>
    </alternativeName>
    <alternativeName>
        <fullName evidence="1">Non-discriminating aspartyl-tRNA synthetase</fullName>
        <shortName evidence="1">ND-AspRS</shortName>
    </alternativeName>
</protein>
<keyword id="KW-0030">Aminoacyl-tRNA synthetase</keyword>
<keyword id="KW-0067">ATP-binding</keyword>
<keyword id="KW-0963">Cytoplasm</keyword>
<keyword id="KW-0436">Ligase</keyword>
<keyword id="KW-0460">Magnesium</keyword>
<keyword id="KW-0479">Metal-binding</keyword>
<keyword id="KW-0547">Nucleotide-binding</keyword>
<keyword id="KW-0648">Protein biosynthesis</keyword>
<sequence>MSLETPRTHYTSQIDIEQIGDDKVTVCGWVHEVRDLGGICFVVVRDREGRAQITLVKKKIDKEIFDAARKLVRESIVAVTGTAKAEGKAPNGYEIIPESIVVLNEAESPLPMDTTGKVDAELDTRLDSRFMDLRRERTTAIFKIRHEVLRAVRDFLSKDGYIETCSPKVVATATEGGTSLFPITYFDREAFLNQSPQLFKQILMSGGLDKVFEIGPIFRAEEHDTRRHLNEATSIDIEASFLDHFDVMEVLEDMVAYVYEQVIENEAASLKALDIELSVPKTPFMKVPYSQAIDIVNAESEETVEWGGDLGTVAEHTIGEHVFKETGESHYFITDWPTEIKPFYAMPYEDNPLISKSFDMMHRTMELSSGAQRIHIHDMLKARIESQGLDSDGFDFYLRAFKYGMPPHSGWGIGCERLVMTMLSVENIRDTVLFPRDRKRLSP</sequence>
<proteinExistence type="inferred from homology"/>
<accession>Q12XU7</accession>
<feature type="chain" id="PRO_1000006702" description="Aspartate--tRNA(Asp/Asn) ligase">
    <location>
        <begin position="1"/>
        <end position="443"/>
    </location>
</feature>
<feature type="region of interest" description="Aspartate" evidence="1">
    <location>
        <begin position="197"/>
        <end position="200"/>
    </location>
</feature>
<feature type="binding site" evidence="1">
    <location>
        <position position="175"/>
    </location>
    <ligand>
        <name>L-aspartate</name>
        <dbReference type="ChEBI" id="CHEBI:29991"/>
    </ligand>
</feature>
<feature type="binding site" evidence="1">
    <location>
        <begin position="219"/>
        <end position="221"/>
    </location>
    <ligand>
        <name>ATP</name>
        <dbReference type="ChEBI" id="CHEBI:30616"/>
    </ligand>
</feature>
<feature type="binding site" evidence="1">
    <location>
        <position position="219"/>
    </location>
    <ligand>
        <name>L-aspartate</name>
        <dbReference type="ChEBI" id="CHEBI:29991"/>
    </ligand>
</feature>
<feature type="binding site" evidence="1">
    <location>
        <begin position="227"/>
        <end position="229"/>
    </location>
    <ligand>
        <name>ATP</name>
        <dbReference type="ChEBI" id="CHEBI:30616"/>
    </ligand>
</feature>
<feature type="binding site" evidence="1">
    <location>
        <position position="366"/>
    </location>
    <ligand>
        <name>ATP</name>
        <dbReference type="ChEBI" id="CHEBI:30616"/>
    </ligand>
</feature>
<feature type="binding site" evidence="1">
    <location>
        <position position="366"/>
    </location>
    <ligand>
        <name>Mg(2+)</name>
        <dbReference type="ChEBI" id="CHEBI:18420"/>
        <label>2</label>
    </ligand>
</feature>
<feature type="binding site" evidence="1">
    <location>
        <position position="366"/>
    </location>
    <ligand>
        <name>Mg(2+)</name>
        <dbReference type="ChEBI" id="CHEBI:18420"/>
        <label>3</label>
    </ligand>
</feature>
<feature type="binding site" evidence="1">
    <location>
        <position position="369"/>
    </location>
    <ligand>
        <name>L-aspartate</name>
        <dbReference type="ChEBI" id="CHEBI:29991"/>
    </ligand>
</feature>
<feature type="binding site" evidence="1">
    <location>
        <position position="369"/>
    </location>
    <ligand>
        <name>Mg(2+)</name>
        <dbReference type="ChEBI" id="CHEBI:18420"/>
        <label>2</label>
    </ligand>
</feature>
<feature type="binding site" evidence="1">
    <location>
        <position position="373"/>
    </location>
    <ligand>
        <name>L-aspartate</name>
        <dbReference type="ChEBI" id="CHEBI:29991"/>
    </ligand>
</feature>
<feature type="binding site" evidence="1">
    <location>
        <begin position="414"/>
        <end position="417"/>
    </location>
    <ligand>
        <name>ATP</name>
        <dbReference type="ChEBI" id="CHEBI:30616"/>
    </ligand>
</feature>
<feature type="site" description="Important for tRNA non-discrimination" evidence="1">
    <location>
        <position position="90"/>
    </location>
</feature>
<reference key="1">
    <citation type="journal article" date="2009" name="ISME J.">
        <title>The genome sequence of the psychrophilic archaeon, Methanococcoides burtonii: the role of genome evolution in cold adaptation.</title>
        <authorList>
            <person name="Allen M.A."/>
            <person name="Lauro F.M."/>
            <person name="Williams T.J."/>
            <person name="Burg D."/>
            <person name="Siddiqui K.S."/>
            <person name="De Francisci D."/>
            <person name="Chong K.W."/>
            <person name="Pilak O."/>
            <person name="Chew H.H."/>
            <person name="De Maere M.Z."/>
            <person name="Ting L."/>
            <person name="Katrib M."/>
            <person name="Ng C."/>
            <person name="Sowers K.R."/>
            <person name="Galperin M.Y."/>
            <person name="Anderson I.J."/>
            <person name="Ivanova N."/>
            <person name="Dalin E."/>
            <person name="Martinez M."/>
            <person name="Lapidus A."/>
            <person name="Hauser L."/>
            <person name="Land M."/>
            <person name="Thomas T."/>
            <person name="Cavicchioli R."/>
        </authorList>
    </citation>
    <scope>NUCLEOTIDE SEQUENCE [LARGE SCALE GENOMIC DNA]</scope>
    <source>
        <strain>DSM 6242 / NBRC 107633 / OCM 468 / ACE-M</strain>
    </source>
</reference>
<evidence type="ECO:0000255" key="1">
    <source>
        <dbReference type="HAMAP-Rule" id="MF_02075"/>
    </source>
</evidence>
<organism>
    <name type="scientific">Methanococcoides burtonii (strain DSM 6242 / NBRC 107633 / OCM 468 / ACE-M)</name>
    <dbReference type="NCBI Taxonomy" id="259564"/>
    <lineage>
        <taxon>Archaea</taxon>
        <taxon>Methanobacteriati</taxon>
        <taxon>Methanobacteriota</taxon>
        <taxon>Stenosarchaea group</taxon>
        <taxon>Methanomicrobia</taxon>
        <taxon>Methanosarcinales</taxon>
        <taxon>Methanosarcinaceae</taxon>
        <taxon>Methanococcoides</taxon>
    </lineage>
</organism>
<gene>
    <name evidence="1" type="primary">aspS</name>
    <name type="ordered locus">Mbur_0772</name>
</gene>
<comment type="function">
    <text evidence="1">Aspartyl-tRNA synthetase with relaxed tRNA specificity since it is able to aspartylate not only its cognate tRNA(Asp) but also tRNA(Asn). Reaction proceeds in two steps: L-aspartate is first activated by ATP to form Asp-AMP and then transferred to the acceptor end of tRNA(Asp/Asn).</text>
</comment>
<comment type="catalytic activity">
    <reaction evidence="1">
        <text>tRNA(Asx) + L-aspartate + ATP = L-aspartyl-tRNA(Asx) + AMP + diphosphate</text>
        <dbReference type="Rhea" id="RHEA:18349"/>
        <dbReference type="Rhea" id="RHEA-COMP:9710"/>
        <dbReference type="Rhea" id="RHEA-COMP:9711"/>
        <dbReference type="ChEBI" id="CHEBI:29991"/>
        <dbReference type="ChEBI" id="CHEBI:30616"/>
        <dbReference type="ChEBI" id="CHEBI:33019"/>
        <dbReference type="ChEBI" id="CHEBI:78442"/>
        <dbReference type="ChEBI" id="CHEBI:78516"/>
        <dbReference type="ChEBI" id="CHEBI:456215"/>
        <dbReference type="EC" id="6.1.1.23"/>
    </reaction>
</comment>
<comment type="cofactor">
    <cofactor evidence="1">
        <name>Mg(2+)</name>
        <dbReference type="ChEBI" id="CHEBI:18420"/>
    </cofactor>
    <text evidence="1">Binds 3 Mg(2+) cations per subunit. The strongest magnesium site (Mg1) is bound to the beta- and gamma-phosphates of ATP and four water molecules complete its coordination sphere.</text>
</comment>
<comment type="subunit">
    <text evidence="1">Homodimer.</text>
</comment>
<comment type="subcellular location">
    <subcellularLocation>
        <location evidence="1">Cytoplasm</location>
    </subcellularLocation>
</comment>
<comment type="similarity">
    <text evidence="1">Belongs to the class-II aminoacyl-tRNA synthetase family. Type 2 subfamily.</text>
</comment>
<dbReference type="EC" id="6.1.1.23" evidence="1"/>
<dbReference type="EMBL" id="CP000300">
    <property type="protein sequence ID" value="ABE51729.1"/>
    <property type="molecule type" value="Genomic_DNA"/>
</dbReference>
<dbReference type="RefSeq" id="WP_011498884.1">
    <property type="nucleotide sequence ID" value="NC_007955.1"/>
</dbReference>
<dbReference type="SMR" id="Q12XU7"/>
<dbReference type="STRING" id="259564.Mbur_0772"/>
<dbReference type="GeneID" id="3996677"/>
<dbReference type="KEGG" id="mbu:Mbur_0772"/>
<dbReference type="HOGENOM" id="CLU_004553_2_1_2"/>
<dbReference type="OrthoDB" id="5908at2157"/>
<dbReference type="Proteomes" id="UP000001979">
    <property type="component" value="Chromosome"/>
</dbReference>
<dbReference type="GO" id="GO:0017101">
    <property type="term" value="C:aminoacyl-tRNA synthetase multienzyme complex"/>
    <property type="evidence" value="ECO:0007669"/>
    <property type="project" value="TreeGrafter"/>
</dbReference>
<dbReference type="GO" id="GO:0005829">
    <property type="term" value="C:cytosol"/>
    <property type="evidence" value="ECO:0007669"/>
    <property type="project" value="TreeGrafter"/>
</dbReference>
<dbReference type="GO" id="GO:0004815">
    <property type="term" value="F:aspartate-tRNA ligase activity"/>
    <property type="evidence" value="ECO:0007669"/>
    <property type="project" value="UniProtKB-UniRule"/>
</dbReference>
<dbReference type="GO" id="GO:0050560">
    <property type="term" value="F:aspartate-tRNA(Asn) ligase activity"/>
    <property type="evidence" value="ECO:0007669"/>
    <property type="project" value="UniProtKB-EC"/>
</dbReference>
<dbReference type="GO" id="GO:0005524">
    <property type="term" value="F:ATP binding"/>
    <property type="evidence" value="ECO:0007669"/>
    <property type="project" value="UniProtKB-UniRule"/>
</dbReference>
<dbReference type="GO" id="GO:0000287">
    <property type="term" value="F:magnesium ion binding"/>
    <property type="evidence" value="ECO:0007669"/>
    <property type="project" value="UniProtKB-UniRule"/>
</dbReference>
<dbReference type="GO" id="GO:0003723">
    <property type="term" value="F:RNA binding"/>
    <property type="evidence" value="ECO:0007669"/>
    <property type="project" value="TreeGrafter"/>
</dbReference>
<dbReference type="GO" id="GO:0006422">
    <property type="term" value="P:aspartyl-tRNA aminoacylation"/>
    <property type="evidence" value="ECO:0007669"/>
    <property type="project" value="UniProtKB-UniRule"/>
</dbReference>
<dbReference type="CDD" id="cd00776">
    <property type="entry name" value="AsxRS_core"/>
    <property type="match status" value="1"/>
</dbReference>
<dbReference type="CDD" id="cd04316">
    <property type="entry name" value="ND_PkAspRS_like_N"/>
    <property type="match status" value="1"/>
</dbReference>
<dbReference type="FunFam" id="3.30.930.10:FF:000038">
    <property type="entry name" value="Aspartate--tRNA ligase"/>
    <property type="match status" value="1"/>
</dbReference>
<dbReference type="Gene3D" id="3.30.930.10">
    <property type="entry name" value="Bira Bifunctional Protein, Domain 2"/>
    <property type="match status" value="1"/>
</dbReference>
<dbReference type="Gene3D" id="2.40.50.140">
    <property type="entry name" value="Nucleic acid-binding proteins"/>
    <property type="match status" value="1"/>
</dbReference>
<dbReference type="HAMAP" id="MF_02075">
    <property type="entry name" value="Asp_tRNA_synth_type2"/>
    <property type="match status" value="1"/>
</dbReference>
<dbReference type="InterPro" id="IPR004364">
    <property type="entry name" value="Aa-tRNA-synt_II"/>
</dbReference>
<dbReference type="InterPro" id="IPR006195">
    <property type="entry name" value="aa-tRNA-synth_II"/>
</dbReference>
<dbReference type="InterPro" id="IPR045864">
    <property type="entry name" value="aa-tRNA-synth_II/BPL/LPL"/>
</dbReference>
<dbReference type="InterPro" id="IPR004523">
    <property type="entry name" value="Asp-tRNA_synthase_2"/>
</dbReference>
<dbReference type="InterPro" id="IPR002312">
    <property type="entry name" value="Asp/Asn-tRNA-synth_IIb"/>
</dbReference>
<dbReference type="InterPro" id="IPR012340">
    <property type="entry name" value="NA-bd_OB-fold"/>
</dbReference>
<dbReference type="InterPro" id="IPR004365">
    <property type="entry name" value="NA-bd_OB_tRNA"/>
</dbReference>
<dbReference type="NCBIfam" id="TIGR00458">
    <property type="entry name" value="aspS_nondisc"/>
    <property type="match status" value="1"/>
</dbReference>
<dbReference type="NCBIfam" id="NF003483">
    <property type="entry name" value="PRK05159.1"/>
    <property type="match status" value="1"/>
</dbReference>
<dbReference type="PANTHER" id="PTHR43450:SF1">
    <property type="entry name" value="ASPARTATE--TRNA LIGASE, CYTOPLASMIC"/>
    <property type="match status" value="1"/>
</dbReference>
<dbReference type="PANTHER" id="PTHR43450">
    <property type="entry name" value="ASPARTYL-TRNA SYNTHETASE"/>
    <property type="match status" value="1"/>
</dbReference>
<dbReference type="Pfam" id="PF00152">
    <property type="entry name" value="tRNA-synt_2"/>
    <property type="match status" value="1"/>
</dbReference>
<dbReference type="Pfam" id="PF01336">
    <property type="entry name" value="tRNA_anti-codon"/>
    <property type="match status" value="1"/>
</dbReference>
<dbReference type="PRINTS" id="PR01042">
    <property type="entry name" value="TRNASYNTHASP"/>
</dbReference>
<dbReference type="SUPFAM" id="SSF55681">
    <property type="entry name" value="Class II aaRS and biotin synthetases"/>
    <property type="match status" value="1"/>
</dbReference>
<dbReference type="SUPFAM" id="SSF50249">
    <property type="entry name" value="Nucleic acid-binding proteins"/>
    <property type="match status" value="1"/>
</dbReference>
<dbReference type="PROSITE" id="PS50862">
    <property type="entry name" value="AA_TRNA_LIGASE_II"/>
    <property type="match status" value="1"/>
</dbReference>
<name>SYDND_METBU</name>